<proteinExistence type="inferred from homology"/>
<gene>
    <name evidence="1" type="primary">mtaD</name>
    <name type="ordered locus">Dhaf_3763</name>
</gene>
<comment type="function">
    <text evidence="1">Catalyzes the deamination of 5-methylthioadenosine and S-adenosyl-L-homocysteine into 5-methylthioinosine and S-inosyl-L-homocysteine, respectively. Is also able to deaminate adenosine.</text>
</comment>
<comment type="catalytic activity">
    <reaction evidence="1">
        <text>S-adenosyl-L-homocysteine + H2O + H(+) = S-inosyl-L-homocysteine + NH4(+)</text>
        <dbReference type="Rhea" id="RHEA:20716"/>
        <dbReference type="ChEBI" id="CHEBI:15377"/>
        <dbReference type="ChEBI" id="CHEBI:15378"/>
        <dbReference type="ChEBI" id="CHEBI:28938"/>
        <dbReference type="ChEBI" id="CHEBI:57856"/>
        <dbReference type="ChEBI" id="CHEBI:57985"/>
        <dbReference type="EC" id="3.5.4.28"/>
    </reaction>
</comment>
<comment type="catalytic activity">
    <reaction evidence="1">
        <text>S-methyl-5'-thioadenosine + H2O + H(+) = S-methyl-5'-thioinosine + NH4(+)</text>
        <dbReference type="Rhea" id="RHEA:25025"/>
        <dbReference type="ChEBI" id="CHEBI:15377"/>
        <dbReference type="ChEBI" id="CHEBI:15378"/>
        <dbReference type="ChEBI" id="CHEBI:17509"/>
        <dbReference type="ChEBI" id="CHEBI:28938"/>
        <dbReference type="ChEBI" id="CHEBI:48595"/>
        <dbReference type="EC" id="3.5.4.31"/>
    </reaction>
</comment>
<comment type="cofactor">
    <cofactor evidence="1">
        <name>Zn(2+)</name>
        <dbReference type="ChEBI" id="CHEBI:29105"/>
    </cofactor>
    <text evidence="1">Binds 1 zinc ion per subunit.</text>
</comment>
<comment type="similarity">
    <text evidence="1">Belongs to the metallo-dependent hydrolases superfamily. MTA/SAH deaminase family.</text>
</comment>
<organism>
    <name type="scientific">Desulfitobacterium hafniense (strain DSM 10664 / DCB-2)</name>
    <dbReference type="NCBI Taxonomy" id="272564"/>
    <lineage>
        <taxon>Bacteria</taxon>
        <taxon>Bacillati</taxon>
        <taxon>Bacillota</taxon>
        <taxon>Clostridia</taxon>
        <taxon>Eubacteriales</taxon>
        <taxon>Desulfitobacteriaceae</taxon>
        <taxon>Desulfitobacterium</taxon>
    </lineage>
</organism>
<protein>
    <recommendedName>
        <fullName evidence="1">5-methylthioadenosine/S-adenosylhomocysteine deaminase</fullName>
        <shortName evidence="1">MTA/SAH deaminase</shortName>
        <ecNumber evidence="1">3.5.4.28</ecNumber>
        <ecNumber evidence="1">3.5.4.31</ecNumber>
    </recommendedName>
</protein>
<evidence type="ECO:0000255" key="1">
    <source>
        <dbReference type="HAMAP-Rule" id="MF_01281"/>
    </source>
</evidence>
<reference key="1">
    <citation type="journal article" date="2012" name="BMC Microbiol.">
        <title>Genome sequence of Desulfitobacterium hafniense DCB-2, a Gram-positive anaerobe capable of dehalogenation and metal reduction.</title>
        <authorList>
            <person name="Kim S.H."/>
            <person name="Harzman C."/>
            <person name="Davis J.K."/>
            <person name="Hutcheson R."/>
            <person name="Broderick J.B."/>
            <person name="Marsh T.L."/>
            <person name="Tiedje J.M."/>
        </authorList>
    </citation>
    <scope>NUCLEOTIDE SEQUENCE [LARGE SCALE GENOMIC DNA]</scope>
    <source>
        <strain>DSM 10664 / DCB-2</strain>
    </source>
</reference>
<dbReference type="EC" id="3.5.4.28" evidence="1"/>
<dbReference type="EC" id="3.5.4.31" evidence="1"/>
<dbReference type="EMBL" id="CP001336">
    <property type="protein sequence ID" value="ACL21779.1"/>
    <property type="molecule type" value="Genomic_DNA"/>
</dbReference>
<dbReference type="RefSeq" id="WP_015944766.1">
    <property type="nucleotide sequence ID" value="NC_011830.1"/>
</dbReference>
<dbReference type="SMR" id="B8FRL9"/>
<dbReference type="KEGG" id="dhd:Dhaf_3763"/>
<dbReference type="HOGENOM" id="CLU_012358_2_1_9"/>
<dbReference type="Proteomes" id="UP000007726">
    <property type="component" value="Chromosome"/>
</dbReference>
<dbReference type="GO" id="GO:0090614">
    <property type="term" value="F:5'-methylthioadenosine deaminase activity"/>
    <property type="evidence" value="ECO:0007669"/>
    <property type="project" value="UniProtKB-UniRule"/>
</dbReference>
<dbReference type="GO" id="GO:0046872">
    <property type="term" value="F:metal ion binding"/>
    <property type="evidence" value="ECO:0007669"/>
    <property type="project" value="UniProtKB-KW"/>
</dbReference>
<dbReference type="GO" id="GO:0050270">
    <property type="term" value="F:S-adenosylhomocysteine deaminase activity"/>
    <property type="evidence" value="ECO:0007669"/>
    <property type="project" value="UniProtKB-UniRule"/>
</dbReference>
<dbReference type="CDD" id="cd01298">
    <property type="entry name" value="ATZ_TRZ_like"/>
    <property type="match status" value="1"/>
</dbReference>
<dbReference type="FunFam" id="3.20.20.140:FF:000014">
    <property type="entry name" value="5-methylthioadenosine/S-adenosylhomocysteine deaminase"/>
    <property type="match status" value="1"/>
</dbReference>
<dbReference type="Gene3D" id="3.20.20.140">
    <property type="entry name" value="Metal-dependent hydrolases"/>
    <property type="match status" value="1"/>
</dbReference>
<dbReference type="Gene3D" id="2.30.40.10">
    <property type="entry name" value="Urease, subunit C, domain 1"/>
    <property type="match status" value="1"/>
</dbReference>
<dbReference type="HAMAP" id="MF_01281">
    <property type="entry name" value="MTA_SAH_deamin"/>
    <property type="match status" value="1"/>
</dbReference>
<dbReference type="InterPro" id="IPR006680">
    <property type="entry name" value="Amidohydro-rel"/>
</dbReference>
<dbReference type="InterPro" id="IPR023512">
    <property type="entry name" value="Deaminase_MtaD/DadD"/>
</dbReference>
<dbReference type="InterPro" id="IPR011059">
    <property type="entry name" value="Metal-dep_hydrolase_composite"/>
</dbReference>
<dbReference type="InterPro" id="IPR032466">
    <property type="entry name" value="Metal_Hydrolase"/>
</dbReference>
<dbReference type="InterPro" id="IPR050287">
    <property type="entry name" value="MTA/SAH_deaminase"/>
</dbReference>
<dbReference type="PANTHER" id="PTHR43794:SF11">
    <property type="entry name" value="AMIDOHYDROLASE-RELATED DOMAIN-CONTAINING PROTEIN"/>
    <property type="match status" value="1"/>
</dbReference>
<dbReference type="PANTHER" id="PTHR43794">
    <property type="entry name" value="AMINOHYDROLASE SSNA-RELATED"/>
    <property type="match status" value="1"/>
</dbReference>
<dbReference type="Pfam" id="PF01979">
    <property type="entry name" value="Amidohydro_1"/>
    <property type="match status" value="1"/>
</dbReference>
<dbReference type="SUPFAM" id="SSF51338">
    <property type="entry name" value="Composite domain of metallo-dependent hydrolases"/>
    <property type="match status" value="1"/>
</dbReference>
<dbReference type="SUPFAM" id="SSF51556">
    <property type="entry name" value="Metallo-dependent hydrolases"/>
    <property type="match status" value="1"/>
</dbReference>
<name>MTAD_DESHD</name>
<keyword id="KW-0378">Hydrolase</keyword>
<keyword id="KW-0479">Metal-binding</keyword>
<keyword id="KW-0862">Zinc</keyword>
<feature type="chain" id="PRO_1000165240" description="5-methylthioadenosine/S-adenosylhomocysteine deaminase">
    <location>
        <begin position="1"/>
        <end position="431"/>
    </location>
</feature>
<feature type="binding site" evidence="1">
    <location>
        <position position="66"/>
    </location>
    <ligand>
        <name>Zn(2+)</name>
        <dbReference type="ChEBI" id="CHEBI:29105"/>
    </ligand>
</feature>
<feature type="binding site" evidence="1">
    <location>
        <position position="68"/>
    </location>
    <ligand>
        <name>Zn(2+)</name>
        <dbReference type="ChEBI" id="CHEBI:29105"/>
    </ligand>
</feature>
<feature type="binding site" evidence="1">
    <location>
        <position position="95"/>
    </location>
    <ligand>
        <name>substrate</name>
    </ligand>
</feature>
<feature type="binding site" evidence="1">
    <location>
        <position position="147"/>
    </location>
    <ligand>
        <name>substrate</name>
    </ligand>
</feature>
<feature type="binding site" evidence="1">
    <location>
        <position position="185"/>
    </location>
    <ligand>
        <name>substrate</name>
    </ligand>
</feature>
<feature type="binding site" evidence="1">
    <location>
        <position position="212"/>
    </location>
    <ligand>
        <name>Zn(2+)</name>
        <dbReference type="ChEBI" id="CHEBI:29105"/>
    </ligand>
</feature>
<feature type="binding site" evidence="1">
    <location>
        <position position="215"/>
    </location>
    <ligand>
        <name>substrate</name>
    </ligand>
</feature>
<feature type="binding site" evidence="1">
    <location>
        <position position="300"/>
    </location>
    <ligand>
        <name>substrate</name>
    </ligand>
</feature>
<feature type="binding site" evidence="1">
    <location>
        <position position="300"/>
    </location>
    <ligand>
        <name>Zn(2+)</name>
        <dbReference type="ChEBI" id="CHEBI:29105"/>
    </ligand>
</feature>
<sequence>MSKILIRAMVLPMTGPEDFYPEGEIGIENDRILFVGEKGSAPDSFIPDQIIDLPEDVVMPGLINTHTHAAMTMLRSYADDLPLMPWLQTKIWPFEDKMSDEDIYWGTLLALGEMIQSGTTTMLDMYASMDQVAKAVLEAGTRGVLSRGLIGNAPNGERAFAENMDLVKNYHGAGQGRIQVMFGPHAPYTCSGEFLQRVKQEADRLGVGIHIHVAETEDEIKTIKEQYGKTPVQWLEELGLFGGHVVAAHCVHLTEEDQEIMAQNKVFIAHNPESNMKLNSGTAPIPELRSRGVVVGLGTDGTSSNNNLDMFGEMRSAAFQQKLVKGATALPAYEVLQMATVDGARTLGLHDVGVLAPGYKADLISINFDQPHFYPRFSIPAHLVYVAHAGDVRTVMVDGKILMQERQLMTIDIKRVCREVEKRAKGIAQGL</sequence>
<accession>B8FRL9</accession>